<dbReference type="EMBL" id="CR382124">
    <property type="protein sequence ID" value="CAH00959.1"/>
    <property type="molecule type" value="Genomic_DNA"/>
</dbReference>
<dbReference type="RefSeq" id="XP_453863.1">
    <property type="nucleotide sequence ID" value="XM_453863.1"/>
</dbReference>
<dbReference type="SMR" id="Q6CQC6"/>
<dbReference type="FunCoup" id="Q6CQC6">
    <property type="interactions" value="95"/>
</dbReference>
<dbReference type="STRING" id="284590.Q6CQC6"/>
<dbReference type="PaxDb" id="284590-Q6CQC6"/>
<dbReference type="KEGG" id="kla:KLLA0_D18139g"/>
<dbReference type="HOGENOM" id="CLU_138722_0_0_1"/>
<dbReference type="InParanoid" id="Q6CQC6"/>
<dbReference type="OMA" id="FDCRDVY"/>
<dbReference type="Proteomes" id="UP000000598">
    <property type="component" value="Chromosome D"/>
</dbReference>
<dbReference type="GO" id="GO:0008180">
    <property type="term" value="C:COP9 signalosome"/>
    <property type="evidence" value="ECO:0007669"/>
    <property type="project" value="UniProtKB-KW"/>
</dbReference>
<dbReference type="GO" id="GO:0005737">
    <property type="term" value="C:cytoplasm"/>
    <property type="evidence" value="ECO:0007669"/>
    <property type="project" value="UniProtKB-SubCell"/>
</dbReference>
<dbReference type="GO" id="GO:0000338">
    <property type="term" value="P:protein deneddylation"/>
    <property type="evidence" value="ECO:0007669"/>
    <property type="project" value="InterPro"/>
</dbReference>
<dbReference type="InterPro" id="IPR016806">
    <property type="entry name" value="Csn9_fungi"/>
</dbReference>
<dbReference type="PIRSF" id="PIRSF022632">
    <property type="entry name" value="UCP022632"/>
    <property type="match status" value="1"/>
</dbReference>
<proteinExistence type="inferred from homology"/>
<sequence>MMRELLRNLIEDKTVINYKKWWMECKDAQETKLLAILCFYDIDDLPEETTAGLDKFVLDKLRVLSLLSLCELSTEVNYQEIKEKCDLKTDGEVEKLLIRAELFVDLKIDSVARRATVLEYKISRDVYSGEKGVPFHTPVRSKINILSALINWRSSLTD</sequence>
<gene>
    <name type="primary">CSN9</name>
    <name type="ordered locus">KLLA0D18139g</name>
</gene>
<reference key="1">
    <citation type="journal article" date="2004" name="Nature">
        <title>Genome evolution in yeasts.</title>
        <authorList>
            <person name="Dujon B."/>
            <person name="Sherman D."/>
            <person name="Fischer G."/>
            <person name="Durrens P."/>
            <person name="Casaregola S."/>
            <person name="Lafontaine I."/>
            <person name="de Montigny J."/>
            <person name="Marck C."/>
            <person name="Neuveglise C."/>
            <person name="Talla E."/>
            <person name="Goffard N."/>
            <person name="Frangeul L."/>
            <person name="Aigle M."/>
            <person name="Anthouard V."/>
            <person name="Babour A."/>
            <person name="Barbe V."/>
            <person name="Barnay S."/>
            <person name="Blanchin S."/>
            <person name="Beckerich J.-M."/>
            <person name="Beyne E."/>
            <person name="Bleykasten C."/>
            <person name="Boisrame A."/>
            <person name="Boyer J."/>
            <person name="Cattolico L."/>
            <person name="Confanioleri F."/>
            <person name="de Daruvar A."/>
            <person name="Despons L."/>
            <person name="Fabre E."/>
            <person name="Fairhead C."/>
            <person name="Ferry-Dumazet H."/>
            <person name="Groppi A."/>
            <person name="Hantraye F."/>
            <person name="Hennequin C."/>
            <person name="Jauniaux N."/>
            <person name="Joyet P."/>
            <person name="Kachouri R."/>
            <person name="Kerrest A."/>
            <person name="Koszul R."/>
            <person name="Lemaire M."/>
            <person name="Lesur I."/>
            <person name="Ma L."/>
            <person name="Muller H."/>
            <person name="Nicaud J.-M."/>
            <person name="Nikolski M."/>
            <person name="Oztas S."/>
            <person name="Ozier-Kalogeropoulos O."/>
            <person name="Pellenz S."/>
            <person name="Potier S."/>
            <person name="Richard G.-F."/>
            <person name="Straub M.-L."/>
            <person name="Suleau A."/>
            <person name="Swennen D."/>
            <person name="Tekaia F."/>
            <person name="Wesolowski-Louvel M."/>
            <person name="Westhof E."/>
            <person name="Wirth B."/>
            <person name="Zeniou-Meyer M."/>
            <person name="Zivanovic Y."/>
            <person name="Bolotin-Fukuhara M."/>
            <person name="Thierry A."/>
            <person name="Bouchier C."/>
            <person name="Caudron B."/>
            <person name="Scarpelli C."/>
            <person name="Gaillardin C."/>
            <person name="Weissenbach J."/>
            <person name="Wincker P."/>
            <person name="Souciet J.-L."/>
        </authorList>
    </citation>
    <scope>NUCLEOTIDE SEQUENCE [LARGE SCALE GENOMIC DNA]</scope>
    <source>
        <strain>ATCC 8585 / CBS 2359 / DSM 70799 / NBRC 1267 / NRRL Y-1140 / WM37</strain>
    </source>
</reference>
<keyword id="KW-0963">Cytoplasm</keyword>
<keyword id="KW-0539">Nucleus</keyword>
<keyword id="KW-1185">Reference proteome</keyword>
<keyword id="KW-0736">Signalosome</keyword>
<accession>Q6CQC6</accession>
<evidence type="ECO:0000250" key="1"/>
<comment type="function">
    <text evidence="1">Component of the COP9 signalosome (CSN) complex that acts as a regulator of the ubiquitin (Ubl) conjugation pathway by mediating the deneddylation of the cullin subunit of SCF-type E3 ubiquitin-protein ligase complexes. The complex is involved in the regulation of the mating pheromone response (By similarity).</text>
</comment>
<comment type="subunit">
    <text>Component of a COP9 signalosome-like (CSN) complex.</text>
</comment>
<comment type="subcellular location">
    <subcellularLocation>
        <location evidence="1">Cytoplasm</location>
    </subcellularLocation>
    <subcellularLocation>
        <location evidence="1">Nucleus</location>
    </subcellularLocation>
</comment>
<organism>
    <name type="scientific">Kluyveromyces lactis (strain ATCC 8585 / CBS 2359 / DSM 70799 / NBRC 1267 / NRRL Y-1140 / WM37)</name>
    <name type="common">Yeast</name>
    <name type="synonym">Candida sphaerica</name>
    <dbReference type="NCBI Taxonomy" id="284590"/>
    <lineage>
        <taxon>Eukaryota</taxon>
        <taxon>Fungi</taxon>
        <taxon>Dikarya</taxon>
        <taxon>Ascomycota</taxon>
        <taxon>Saccharomycotina</taxon>
        <taxon>Saccharomycetes</taxon>
        <taxon>Saccharomycetales</taxon>
        <taxon>Saccharomycetaceae</taxon>
        <taxon>Kluyveromyces</taxon>
    </lineage>
</organism>
<protein>
    <recommendedName>
        <fullName>COP9 signalosome complex subunit 9</fullName>
    </recommendedName>
</protein>
<feature type="chain" id="PRO_0000121019" description="COP9 signalosome complex subunit 9">
    <location>
        <begin position="1"/>
        <end position="158"/>
    </location>
</feature>
<feature type="domain" description="PCI">
    <location>
        <begin position="5"/>
        <end position="119"/>
    </location>
</feature>
<name>CSN9_KLULA</name>